<evidence type="ECO:0000250" key="1">
    <source>
        <dbReference type="UniProtKB" id="A0A1C9J6A7"/>
    </source>
</evidence>
<evidence type="ECO:0000250" key="2">
    <source>
        <dbReference type="UniProtKB" id="Q40577"/>
    </source>
</evidence>
<evidence type="ECO:0000250" key="3">
    <source>
        <dbReference type="UniProtKB" id="Q6JD73"/>
    </source>
</evidence>
<evidence type="ECO:0000255" key="4"/>
<evidence type="ECO:0000269" key="5">
    <source>
    </source>
</evidence>
<evidence type="ECO:0000303" key="6">
    <source>
    </source>
</evidence>
<evidence type="ECO:0000305" key="7"/>
<reference key="1">
    <citation type="journal article" date="2007" name="Phytochemistry">
        <title>Geraniol synthases from perilla and their taxonomical significance.</title>
        <authorList>
            <person name="Ito M."/>
            <person name="Honda G."/>
        </authorList>
    </citation>
    <scope>NUCLEOTIDE SEQUENCE [MRNA]</scope>
    <scope>FUNCTION</scope>
    <scope>CATALYTIC ACTIVITY</scope>
    <scope>PATHWAY</scope>
    <scope>COFACTOR</scope>
    <source>
        <strain>cv. 1861</strain>
        <strain>cv. 4935</strain>
        <strain>cv. 87</strain>
        <tissue>Leaf</tissue>
    </source>
</reference>
<sequence>MSSISQKVVIGLNKAAANNNLQNLDRRGFKTRCVSSSKAASCLRASCSLQLDVKPVQEGRRSGNYQPSIWDFNYVQSLNTPYKEERYLTRHAELIVQVKPLLEKKMEPAQQLELIDDLNNLGLSYFFQDRIKQILSFIYDENQCFHSNINDQAEKRDLYFTALGFRLLRQHGFDVSQEVFDCFKNDNGSDFKASLSDNTKGLLQLYEASFLVREGEDTLEQARQFATKFLRRKLDEIDDNHLLSCIHHSLEIPLHWRIQRLEARWFLDAYATRHDMNPVILELAKLDFNIIQATHQEELKDVSRWWQNTRLAEKLPFVRDRLVESYFWAIALFEPHQYGYQRRVAAKIITLATSIDDVYDIYGTLDELQLFTDNFRRWDTESLGRLPYSMQLFYMVIHNFVSELAYEILKEKGFIVIPYLQRSWVDLAESFLKEANWYYSGYTPSLEEYIDNGSISIGAVAVLSQVYFTLANSIEKPKIESMYKYHHILRLSGLLVRLHDDLGTSLFEKKRGDVPKAVEICMKERNVTEEEAEEHVKYLIREAWKEMNTATTAAGCPFMDELNVAAANLGRAAQFVYLDGDGHGVQHSKIHQQMGGLMFEPYV</sequence>
<comment type="function">
    <text evidence="5">Monoterpene synthase (mono-TPS) involved in the biosynthesis of monoterpenes natural products (PubMed:17187833). Catalyzes the conversion of (2E)-geranyl diphosphate (GPP) into geraniol (PubMed:17187833).</text>
</comment>
<comment type="catalytic activity">
    <reaction evidence="5">
        <text>(2E)-geranyl diphosphate + H2O = (2E)-geraniol + diphosphate</text>
        <dbReference type="Rhea" id="RHEA:32679"/>
        <dbReference type="ChEBI" id="CHEBI:15377"/>
        <dbReference type="ChEBI" id="CHEBI:17447"/>
        <dbReference type="ChEBI" id="CHEBI:33019"/>
        <dbReference type="ChEBI" id="CHEBI:58057"/>
        <dbReference type="EC" id="3.1.7.11"/>
    </reaction>
    <physiologicalReaction direction="left-to-right" evidence="5">
        <dbReference type="Rhea" id="RHEA:32680"/>
    </physiologicalReaction>
</comment>
<comment type="cofactor">
    <cofactor evidence="5">
        <name>Mg(2+)</name>
        <dbReference type="ChEBI" id="CHEBI:18420"/>
    </cofactor>
    <cofactor evidence="5">
        <name>Mn(2+)</name>
        <dbReference type="ChEBI" id="CHEBI:29035"/>
    </cofactor>
    <text evidence="1">Binds 3 Mg(2+) or Mn(2+) ions per subunit.</text>
</comment>
<comment type="pathway">
    <text evidence="5">Secondary metabolite biosynthesis; terpenoid biosynthesis.</text>
</comment>
<comment type="subunit">
    <text evidence="3">Monomer.</text>
</comment>
<comment type="subcellular location">
    <subcellularLocation>
        <location evidence="4">Plastid</location>
        <location evidence="4">Chloroplast</location>
    </subcellularLocation>
</comment>
<comment type="domain">
    <text evidence="7">The Asp-Asp-Xaa-Xaa-Asp/Glu (DDXXD/E) motif is important for the catalytic activity, presumably through binding to Mg(2+).</text>
</comment>
<comment type="similarity">
    <text evidence="7">Belongs to the terpene synthase family. Tpsb subfamily.</text>
</comment>
<organism>
    <name type="scientific">Perilla frutescens var. hirtella</name>
    <name type="common">Perilla citriodora</name>
    <name type="synonym">Perilla setoyensis</name>
    <dbReference type="NCBI Taxonomy" id="608512"/>
    <lineage>
        <taxon>Eukaryota</taxon>
        <taxon>Viridiplantae</taxon>
        <taxon>Streptophyta</taxon>
        <taxon>Embryophyta</taxon>
        <taxon>Tracheophyta</taxon>
        <taxon>Spermatophyta</taxon>
        <taxon>Magnoliopsida</taxon>
        <taxon>eudicotyledons</taxon>
        <taxon>Gunneridae</taxon>
        <taxon>Pentapetalae</taxon>
        <taxon>asterids</taxon>
        <taxon>lamiids</taxon>
        <taxon>Lamiales</taxon>
        <taxon>Lamiaceae</taxon>
        <taxon>Nepetoideae</taxon>
        <taxon>Elsholtzieae</taxon>
        <taxon>Perilla</taxon>
    </lineage>
</organism>
<accession>Q4JHG3</accession>
<protein>
    <recommendedName>
        <fullName evidence="6">Geraniol synthase, chloroplastic</fullName>
        <shortName evidence="6">PcTps-C</shortName>
        <ecNumber evidence="5">3.1.7.11</ecNumber>
    </recommendedName>
</protein>
<name>GRNLC_PERFH</name>
<gene>
    <name evidence="6" type="primary">Tps-C</name>
</gene>
<dbReference type="EC" id="3.1.7.11" evidence="5"/>
<dbReference type="EMBL" id="DQ088667">
    <property type="protein sequence ID" value="AAY88965.1"/>
    <property type="molecule type" value="mRNA"/>
</dbReference>
<dbReference type="EMBL" id="DQ234298">
    <property type="protein sequence ID" value="ABB30216.1"/>
    <property type="molecule type" value="mRNA"/>
</dbReference>
<dbReference type="EMBL" id="DQ234299">
    <property type="protein sequence ID" value="ABB30217.1"/>
    <property type="molecule type" value="mRNA"/>
</dbReference>
<dbReference type="SMR" id="Q4JHG3"/>
<dbReference type="BioCyc" id="MetaCyc:MONOMER-13790"/>
<dbReference type="BRENDA" id="3.1.7.11">
    <property type="organism ID" value="12918"/>
</dbReference>
<dbReference type="UniPathway" id="UPA00213"/>
<dbReference type="GO" id="GO:0009507">
    <property type="term" value="C:chloroplast"/>
    <property type="evidence" value="ECO:0007669"/>
    <property type="project" value="UniProtKB-SubCell"/>
</dbReference>
<dbReference type="GO" id="GO:0016787">
    <property type="term" value="F:hydrolase activity"/>
    <property type="evidence" value="ECO:0007669"/>
    <property type="project" value="UniProtKB-KW"/>
</dbReference>
<dbReference type="GO" id="GO:0000287">
    <property type="term" value="F:magnesium ion binding"/>
    <property type="evidence" value="ECO:0007669"/>
    <property type="project" value="InterPro"/>
</dbReference>
<dbReference type="GO" id="GO:0010333">
    <property type="term" value="F:terpene synthase activity"/>
    <property type="evidence" value="ECO:0007669"/>
    <property type="project" value="InterPro"/>
</dbReference>
<dbReference type="GO" id="GO:0016102">
    <property type="term" value="P:diterpenoid biosynthetic process"/>
    <property type="evidence" value="ECO:0007669"/>
    <property type="project" value="InterPro"/>
</dbReference>
<dbReference type="GO" id="GO:1903448">
    <property type="term" value="P:geraniol biosynthetic process"/>
    <property type="evidence" value="ECO:0000314"/>
    <property type="project" value="UniProtKB"/>
</dbReference>
<dbReference type="GO" id="GO:0016099">
    <property type="term" value="P:monoterpenoid biosynthetic process"/>
    <property type="evidence" value="ECO:0000314"/>
    <property type="project" value="UniProtKB"/>
</dbReference>
<dbReference type="CDD" id="cd00684">
    <property type="entry name" value="Terpene_cyclase_plant_C1"/>
    <property type="match status" value="1"/>
</dbReference>
<dbReference type="FunFam" id="1.10.600.10:FF:000007">
    <property type="entry name" value="Isoprene synthase, chloroplastic"/>
    <property type="match status" value="1"/>
</dbReference>
<dbReference type="FunFam" id="1.50.10.130:FF:000001">
    <property type="entry name" value="Isoprene synthase, chloroplastic"/>
    <property type="match status" value="1"/>
</dbReference>
<dbReference type="Gene3D" id="1.10.600.10">
    <property type="entry name" value="Farnesyl Diphosphate Synthase"/>
    <property type="match status" value="1"/>
</dbReference>
<dbReference type="Gene3D" id="1.50.10.130">
    <property type="entry name" value="Terpene synthase, N-terminal domain"/>
    <property type="match status" value="1"/>
</dbReference>
<dbReference type="InterPro" id="IPR008949">
    <property type="entry name" value="Isoprenoid_synthase_dom_sf"/>
</dbReference>
<dbReference type="InterPro" id="IPR044814">
    <property type="entry name" value="Terpene_cyclase_plant_C1"/>
</dbReference>
<dbReference type="InterPro" id="IPR001906">
    <property type="entry name" value="Terpene_synth_N"/>
</dbReference>
<dbReference type="InterPro" id="IPR036965">
    <property type="entry name" value="Terpene_synth_N_sf"/>
</dbReference>
<dbReference type="InterPro" id="IPR050148">
    <property type="entry name" value="Terpene_synthase-like"/>
</dbReference>
<dbReference type="InterPro" id="IPR005630">
    <property type="entry name" value="Terpene_synthase_metal-bd"/>
</dbReference>
<dbReference type="InterPro" id="IPR008930">
    <property type="entry name" value="Terpenoid_cyclase/PrenylTrfase"/>
</dbReference>
<dbReference type="PANTHER" id="PTHR31225">
    <property type="entry name" value="OS04G0344100 PROTEIN-RELATED"/>
    <property type="match status" value="1"/>
</dbReference>
<dbReference type="PANTHER" id="PTHR31225:SF9">
    <property type="entry name" value="TERPENE SYNTHASE 10"/>
    <property type="match status" value="1"/>
</dbReference>
<dbReference type="Pfam" id="PF01397">
    <property type="entry name" value="Terpene_synth"/>
    <property type="match status" value="1"/>
</dbReference>
<dbReference type="Pfam" id="PF03936">
    <property type="entry name" value="Terpene_synth_C"/>
    <property type="match status" value="1"/>
</dbReference>
<dbReference type="SFLD" id="SFLDS00005">
    <property type="entry name" value="Isoprenoid_Synthase_Type_I"/>
    <property type="match status" value="1"/>
</dbReference>
<dbReference type="SFLD" id="SFLDG01604">
    <property type="entry name" value="Terpene_Cyclase_Like_1_C_Termi"/>
    <property type="match status" value="1"/>
</dbReference>
<dbReference type="SFLD" id="SFLDG01014">
    <property type="entry name" value="Terpene_Cyclase_Like_1_N-term"/>
    <property type="match status" value="1"/>
</dbReference>
<dbReference type="SUPFAM" id="SSF48239">
    <property type="entry name" value="Terpenoid cyclases/Protein prenyltransferases"/>
    <property type="match status" value="1"/>
</dbReference>
<dbReference type="SUPFAM" id="SSF48576">
    <property type="entry name" value="Terpenoid synthases"/>
    <property type="match status" value="1"/>
</dbReference>
<proteinExistence type="evidence at protein level"/>
<keyword id="KW-0150">Chloroplast</keyword>
<keyword id="KW-0378">Hydrolase</keyword>
<keyword id="KW-0460">Magnesium</keyword>
<keyword id="KW-0479">Metal-binding</keyword>
<keyword id="KW-0934">Plastid</keyword>
<keyword id="KW-0809">Transit peptide</keyword>
<feature type="transit peptide" description="Chloroplast" evidence="4">
    <location>
        <begin position="1"/>
        <end position="35"/>
    </location>
</feature>
<feature type="chain" id="PRO_0000455254" description="Geraniol synthase, chloroplastic">
    <location>
        <begin position="36"/>
        <end position="603"/>
    </location>
</feature>
<feature type="short sequence motif" description="DDXXD motif" evidence="7">
    <location>
        <begin position="356"/>
        <end position="360"/>
    </location>
</feature>
<feature type="binding site" evidence="2">
    <location>
        <position position="319"/>
    </location>
    <ligand>
        <name>(2E)-geranyl diphosphate</name>
        <dbReference type="ChEBI" id="CHEBI:58057"/>
    </ligand>
</feature>
<feature type="binding site" evidence="2">
    <location>
        <position position="356"/>
    </location>
    <ligand>
        <name>(2E)-geranyl diphosphate</name>
        <dbReference type="ChEBI" id="CHEBI:58057"/>
    </ligand>
</feature>
<feature type="binding site" evidence="2">
    <location>
        <position position="356"/>
    </location>
    <ligand>
        <name>Mg(2+)</name>
        <dbReference type="ChEBI" id="CHEBI:18420"/>
        <label>1</label>
    </ligand>
</feature>
<feature type="binding site" evidence="2">
    <location>
        <position position="356"/>
    </location>
    <ligand>
        <name>Mg(2+)</name>
        <dbReference type="ChEBI" id="CHEBI:18420"/>
        <label>2</label>
    </ligand>
</feature>
<feature type="binding site" evidence="2">
    <location>
        <position position="360"/>
    </location>
    <ligand>
        <name>(2E)-geranyl diphosphate</name>
        <dbReference type="ChEBI" id="CHEBI:58057"/>
    </ligand>
</feature>
<feature type="binding site" evidence="2">
    <location>
        <position position="360"/>
    </location>
    <ligand>
        <name>Mg(2+)</name>
        <dbReference type="ChEBI" id="CHEBI:18420"/>
        <label>1</label>
    </ligand>
</feature>
<feature type="binding site" evidence="2">
    <location>
        <position position="360"/>
    </location>
    <ligand>
        <name>Mg(2+)</name>
        <dbReference type="ChEBI" id="CHEBI:18420"/>
        <label>2</label>
    </ligand>
</feature>
<feature type="binding site" evidence="2">
    <location>
        <position position="497"/>
    </location>
    <ligand>
        <name>(2E)-geranyl diphosphate</name>
        <dbReference type="ChEBI" id="CHEBI:58057"/>
    </ligand>
</feature>
<feature type="binding site" evidence="2">
    <location>
        <position position="500"/>
    </location>
    <ligand>
        <name>(2E)-geranyl diphosphate</name>
        <dbReference type="ChEBI" id="CHEBI:58057"/>
    </ligand>
</feature>
<feature type="binding site" evidence="2">
    <location>
        <position position="500"/>
    </location>
    <ligand>
        <name>Mg(2+)</name>
        <dbReference type="ChEBI" id="CHEBI:18420"/>
        <label>3</label>
    </ligand>
</feature>
<feature type="binding site" evidence="2">
    <location>
        <position position="504"/>
    </location>
    <ligand>
        <name>Mg(2+)</name>
        <dbReference type="ChEBI" id="CHEBI:18420"/>
        <label>3</label>
    </ligand>
</feature>
<feature type="binding site" evidence="2">
    <location>
        <position position="508"/>
    </location>
    <ligand>
        <name>Mg(2+)</name>
        <dbReference type="ChEBI" id="CHEBI:18420"/>
        <label>3</label>
    </ligand>
</feature>